<keyword id="KW-0349">Heme</keyword>
<keyword id="KW-0408">Iron</keyword>
<keyword id="KW-0479">Metal-binding</keyword>
<keyword id="KW-0561">Oxygen transport</keyword>
<keyword id="KW-0597">Phosphoprotein</keyword>
<keyword id="KW-1185">Reference proteome</keyword>
<keyword id="KW-0813">Transport</keyword>
<gene>
    <name type="primary">HBE1</name>
</gene>
<sequence>MVHFTAEEKAAITSLWGKMNVEEAGGEALGRLLVVYPWTQRFFDNFGNLSSPSAILGNPKVKAHGKKVLTSFGDAIKNMDNLKTTFAKLSELHCDKLHVDPENFRLLGNVLVIILATHFGKEFTPEVQAAWQKLVSAVAIALGHKYH</sequence>
<comment type="function">
    <text>The epsilon chain is a beta-type chain of early mammalian embryonic hemoglobin.</text>
</comment>
<comment type="subunit">
    <text>Heterotetramer of two alpha chains and two epsilon chains in early embryonic hemoglobin Gower-2; two zeta chains and two epsilon chains in early embryonic hemoglobin Gower-1.</text>
</comment>
<comment type="tissue specificity">
    <text>Red blood cells.</text>
</comment>
<comment type="similarity">
    <text evidence="2">Belongs to the globin family.</text>
</comment>
<accession>P68026</accession>
<accession>P51439</accession>
<proteinExistence type="evidence at transcript level"/>
<organism>
    <name type="scientific">Callithrix jacchus</name>
    <name type="common">White-tufted-ear marmoset</name>
    <dbReference type="NCBI Taxonomy" id="9483"/>
    <lineage>
        <taxon>Eukaryota</taxon>
        <taxon>Metazoa</taxon>
        <taxon>Chordata</taxon>
        <taxon>Craniata</taxon>
        <taxon>Vertebrata</taxon>
        <taxon>Euteleostomi</taxon>
        <taxon>Mammalia</taxon>
        <taxon>Eutheria</taxon>
        <taxon>Euarchontoglires</taxon>
        <taxon>Primates</taxon>
        <taxon>Haplorrhini</taxon>
        <taxon>Platyrrhini</taxon>
        <taxon>Cebidae</taxon>
        <taxon>Callitrichinae</taxon>
        <taxon>Callithrix</taxon>
        <taxon>Callithrix</taxon>
    </lineage>
</organism>
<name>HBE_CALJA</name>
<evidence type="ECO:0000250" key="1">
    <source>
        <dbReference type="UniProtKB" id="P02100"/>
    </source>
</evidence>
<evidence type="ECO:0000255" key="2">
    <source>
        <dbReference type="PROSITE-ProRule" id="PRU00238"/>
    </source>
</evidence>
<dbReference type="EMBL" id="L25363">
    <property type="protein sequence ID" value="AAA35399.1"/>
    <property type="molecule type" value="Genomic_DNA"/>
</dbReference>
<dbReference type="RefSeq" id="XP_017833339.1">
    <property type="nucleotide sequence ID" value="XM_017977850.4"/>
</dbReference>
<dbReference type="SMR" id="P68026"/>
<dbReference type="FunCoup" id="P68026">
    <property type="interactions" value="16"/>
</dbReference>
<dbReference type="Ensembl" id="ENSCJAT00000069303.3">
    <property type="protein sequence ID" value="ENSCJAP00000059132.2"/>
    <property type="gene ID" value="ENSCJAG00000020214.5"/>
</dbReference>
<dbReference type="GeneID" id="100411327"/>
<dbReference type="KEGG" id="cjc:100411327"/>
<dbReference type="CTD" id="3046"/>
<dbReference type="eggNOG" id="KOG3378">
    <property type="taxonomic scope" value="Eukaryota"/>
</dbReference>
<dbReference type="GeneTree" id="ENSGT00940000163476"/>
<dbReference type="InParanoid" id="P68026"/>
<dbReference type="OrthoDB" id="9886081at2759"/>
<dbReference type="Proteomes" id="UP000008225">
    <property type="component" value="Chromosome 11"/>
</dbReference>
<dbReference type="Bgee" id="ENSCJAG00000020208">
    <property type="expression patterns" value="Expressed in heart and 5 other cell types or tissues"/>
</dbReference>
<dbReference type="GO" id="GO:0072562">
    <property type="term" value="C:blood microparticle"/>
    <property type="evidence" value="ECO:0007669"/>
    <property type="project" value="TreeGrafter"/>
</dbReference>
<dbReference type="GO" id="GO:0031838">
    <property type="term" value="C:haptoglobin-hemoglobin complex"/>
    <property type="evidence" value="ECO:0007669"/>
    <property type="project" value="TreeGrafter"/>
</dbReference>
<dbReference type="GO" id="GO:0005833">
    <property type="term" value="C:hemoglobin complex"/>
    <property type="evidence" value="ECO:0007669"/>
    <property type="project" value="InterPro"/>
</dbReference>
<dbReference type="GO" id="GO:0031720">
    <property type="term" value="F:haptoglobin binding"/>
    <property type="evidence" value="ECO:0007669"/>
    <property type="project" value="TreeGrafter"/>
</dbReference>
<dbReference type="GO" id="GO:0020037">
    <property type="term" value="F:heme binding"/>
    <property type="evidence" value="ECO:0007669"/>
    <property type="project" value="InterPro"/>
</dbReference>
<dbReference type="GO" id="GO:0031721">
    <property type="term" value="F:hemoglobin alpha binding"/>
    <property type="evidence" value="ECO:0007669"/>
    <property type="project" value="TreeGrafter"/>
</dbReference>
<dbReference type="GO" id="GO:0046872">
    <property type="term" value="F:metal ion binding"/>
    <property type="evidence" value="ECO:0007669"/>
    <property type="project" value="UniProtKB-KW"/>
</dbReference>
<dbReference type="GO" id="GO:0043177">
    <property type="term" value="F:organic acid binding"/>
    <property type="evidence" value="ECO:0007669"/>
    <property type="project" value="TreeGrafter"/>
</dbReference>
<dbReference type="GO" id="GO:0019825">
    <property type="term" value="F:oxygen binding"/>
    <property type="evidence" value="ECO:0007669"/>
    <property type="project" value="InterPro"/>
</dbReference>
<dbReference type="GO" id="GO:0005344">
    <property type="term" value="F:oxygen carrier activity"/>
    <property type="evidence" value="ECO:0007669"/>
    <property type="project" value="UniProtKB-KW"/>
</dbReference>
<dbReference type="GO" id="GO:0004601">
    <property type="term" value="F:peroxidase activity"/>
    <property type="evidence" value="ECO:0007669"/>
    <property type="project" value="TreeGrafter"/>
</dbReference>
<dbReference type="GO" id="GO:0042744">
    <property type="term" value="P:hydrogen peroxide catabolic process"/>
    <property type="evidence" value="ECO:0007669"/>
    <property type="project" value="TreeGrafter"/>
</dbReference>
<dbReference type="CDD" id="cd08925">
    <property type="entry name" value="Hb-beta-like"/>
    <property type="match status" value="1"/>
</dbReference>
<dbReference type="FunFam" id="1.10.490.10:FF:000001">
    <property type="entry name" value="Hemoglobin subunit beta"/>
    <property type="match status" value="1"/>
</dbReference>
<dbReference type="Gene3D" id="1.10.490.10">
    <property type="entry name" value="Globins"/>
    <property type="match status" value="1"/>
</dbReference>
<dbReference type="InterPro" id="IPR000971">
    <property type="entry name" value="Globin"/>
</dbReference>
<dbReference type="InterPro" id="IPR009050">
    <property type="entry name" value="Globin-like_sf"/>
</dbReference>
<dbReference type="InterPro" id="IPR012292">
    <property type="entry name" value="Globin/Proto"/>
</dbReference>
<dbReference type="InterPro" id="IPR002337">
    <property type="entry name" value="Hemoglobin_b"/>
</dbReference>
<dbReference type="InterPro" id="IPR050056">
    <property type="entry name" value="Hemoglobin_oxygen_transport"/>
</dbReference>
<dbReference type="PANTHER" id="PTHR11442">
    <property type="entry name" value="HEMOGLOBIN FAMILY MEMBER"/>
    <property type="match status" value="1"/>
</dbReference>
<dbReference type="PANTHER" id="PTHR11442:SF7">
    <property type="entry name" value="HEMOGLOBIN SUBUNIT EPSILON"/>
    <property type="match status" value="1"/>
</dbReference>
<dbReference type="Pfam" id="PF00042">
    <property type="entry name" value="Globin"/>
    <property type="match status" value="1"/>
</dbReference>
<dbReference type="PRINTS" id="PR00814">
    <property type="entry name" value="BETAHAEM"/>
</dbReference>
<dbReference type="SUPFAM" id="SSF46458">
    <property type="entry name" value="Globin-like"/>
    <property type="match status" value="1"/>
</dbReference>
<dbReference type="PROSITE" id="PS01033">
    <property type="entry name" value="GLOBIN"/>
    <property type="match status" value="1"/>
</dbReference>
<reference key="1">
    <citation type="journal article" date="1993" name="Mol. Phylogenet. Evol.">
        <title>Molecular phylogeny of the New World monkeys (Platyrrhini, primates).</title>
        <authorList>
            <person name="Schneider H."/>
            <person name="Schneider M.P.C."/>
            <person name="Sampaio I."/>
            <person name="Harada M.L."/>
            <person name="Stanhope M.J."/>
            <person name="Czekysbuaj J."/>
            <person name="Goodman M."/>
        </authorList>
    </citation>
    <scope>NUCLEOTIDE SEQUENCE [GENOMIC DNA]</scope>
    <source>
        <tissue>Lymphocyte</tissue>
    </source>
</reference>
<protein>
    <recommendedName>
        <fullName>Hemoglobin subunit epsilon</fullName>
    </recommendedName>
    <alternativeName>
        <fullName>Epsilon-globin</fullName>
    </alternativeName>
    <alternativeName>
        <fullName>Hemoglobin epsilon chain</fullName>
    </alternativeName>
</protein>
<feature type="chain" id="PRO_0000053194" description="Hemoglobin subunit epsilon">
    <location>
        <begin position="1"/>
        <end position="147"/>
    </location>
</feature>
<feature type="domain" description="Globin" evidence="2">
    <location>
        <begin position="3"/>
        <end position="147"/>
    </location>
</feature>
<feature type="binding site" description="distal binding residue" evidence="2">
    <location>
        <position position="64"/>
    </location>
    <ligand>
        <name>heme b</name>
        <dbReference type="ChEBI" id="CHEBI:60344"/>
    </ligand>
    <ligandPart>
        <name>Fe</name>
        <dbReference type="ChEBI" id="CHEBI:18248"/>
    </ligandPart>
</feature>
<feature type="binding site" description="proximal binding residue" evidence="2">
    <location>
        <position position="93"/>
    </location>
    <ligand>
        <name>heme b</name>
        <dbReference type="ChEBI" id="CHEBI:60344"/>
    </ligand>
    <ligandPart>
        <name>Fe</name>
        <dbReference type="ChEBI" id="CHEBI:18248"/>
    </ligandPart>
</feature>
<feature type="modified residue" description="Phosphoserine" evidence="1">
    <location>
        <position position="14"/>
    </location>
</feature>
<feature type="modified residue" description="Phosphoserine" evidence="1">
    <location>
        <position position="51"/>
    </location>
</feature>